<organism>
    <name type="scientific">Pseudomonas fluorescens (strain SBW25)</name>
    <dbReference type="NCBI Taxonomy" id="216595"/>
    <lineage>
        <taxon>Bacteria</taxon>
        <taxon>Pseudomonadati</taxon>
        <taxon>Pseudomonadota</taxon>
        <taxon>Gammaproteobacteria</taxon>
        <taxon>Pseudomonadales</taxon>
        <taxon>Pseudomonadaceae</taxon>
        <taxon>Pseudomonas</taxon>
    </lineage>
</organism>
<accession>C3K758</accession>
<feature type="chain" id="PRO_1000213825" description="Orotidine 5'-phosphate decarboxylase">
    <location>
        <begin position="1"/>
        <end position="232"/>
    </location>
</feature>
<feature type="active site" description="Proton donor" evidence="1">
    <location>
        <position position="64"/>
    </location>
</feature>
<feature type="binding site" evidence="1">
    <location>
        <position position="13"/>
    </location>
    <ligand>
        <name>substrate</name>
    </ligand>
</feature>
<feature type="binding site" evidence="1">
    <location>
        <position position="35"/>
    </location>
    <ligand>
        <name>substrate</name>
    </ligand>
</feature>
<feature type="binding site" evidence="1">
    <location>
        <begin position="62"/>
        <end position="71"/>
    </location>
    <ligand>
        <name>substrate</name>
    </ligand>
</feature>
<feature type="binding site" evidence="1">
    <location>
        <position position="122"/>
    </location>
    <ligand>
        <name>substrate</name>
    </ligand>
</feature>
<feature type="binding site" evidence="1">
    <location>
        <position position="182"/>
    </location>
    <ligand>
        <name>substrate</name>
    </ligand>
</feature>
<feature type="binding site" evidence="1">
    <location>
        <position position="191"/>
    </location>
    <ligand>
        <name>substrate</name>
    </ligand>
</feature>
<feature type="binding site" evidence="1">
    <location>
        <position position="211"/>
    </location>
    <ligand>
        <name>substrate</name>
    </ligand>
</feature>
<feature type="binding site" evidence="1">
    <location>
        <position position="212"/>
    </location>
    <ligand>
        <name>substrate</name>
    </ligand>
</feature>
<gene>
    <name evidence="1" type="primary">pyrF</name>
    <name type="ordered locus">PFLU_1851</name>
</gene>
<dbReference type="EC" id="4.1.1.23" evidence="1"/>
<dbReference type="EMBL" id="AM181176">
    <property type="protein sequence ID" value="CAY48098.1"/>
    <property type="molecule type" value="Genomic_DNA"/>
</dbReference>
<dbReference type="RefSeq" id="WP_012723118.1">
    <property type="nucleotide sequence ID" value="NC_012660.1"/>
</dbReference>
<dbReference type="SMR" id="C3K758"/>
<dbReference type="STRING" id="294.SRM1_04143"/>
<dbReference type="GeneID" id="93463542"/>
<dbReference type="eggNOG" id="COG0284">
    <property type="taxonomic scope" value="Bacteria"/>
</dbReference>
<dbReference type="HOGENOM" id="CLU_067069_0_0_6"/>
<dbReference type="OrthoDB" id="9806203at2"/>
<dbReference type="UniPathway" id="UPA00070">
    <property type="reaction ID" value="UER00120"/>
</dbReference>
<dbReference type="GO" id="GO:0005829">
    <property type="term" value="C:cytosol"/>
    <property type="evidence" value="ECO:0007669"/>
    <property type="project" value="TreeGrafter"/>
</dbReference>
<dbReference type="GO" id="GO:0004590">
    <property type="term" value="F:orotidine-5'-phosphate decarboxylase activity"/>
    <property type="evidence" value="ECO:0007669"/>
    <property type="project" value="UniProtKB-UniRule"/>
</dbReference>
<dbReference type="GO" id="GO:0006207">
    <property type="term" value="P:'de novo' pyrimidine nucleobase biosynthetic process"/>
    <property type="evidence" value="ECO:0007669"/>
    <property type="project" value="InterPro"/>
</dbReference>
<dbReference type="GO" id="GO:0044205">
    <property type="term" value="P:'de novo' UMP biosynthetic process"/>
    <property type="evidence" value="ECO:0007669"/>
    <property type="project" value="UniProtKB-UniRule"/>
</dbReference>
<dbReference type="CDD" id="cd04725">
    <property type="entry name" value="OMP_decarboxylase_like"/>
    <property type="match status" value="1"/>
</dbReference>
<dbReference type="FunFam" id="3.20.20.70:FF:000015">
    <property type="entry name" value="Orotidine 5'-phosphate decarboxylase"/>
    <property type="match status" value="1"/>
</dbReference>
<dbReference type="Gene3D" id="3.20.20.70">
    <property type="entry name" value="Aldolase class I"/>
    <property type="match status" value="1"/>
</dbReference>
<dbReference type="HAMAP" id="MF_01200_B">
    <property type="entry name" value="OMPdecase_type1_B"/>
    <property type="match status" value="1"/>
</dbReference>
<dbReference type="InterPro" id="IPR013785">
    <property type="entry name" value="Aldolase_TIM"/>
</dbReference>
<dbReference type="InterPro" id="IPR014732">
    <property type="entry name" value="OMPdecase"/>
</dbReference>
<dbReference type="InterPro" id="IPR018089">
    <property type="entry name" value="OMPdecase_AS"/>
</dbReference>
<dbReference type="InterPro" id="IPR047596">
    <property type="entry name" value="OMPdecase_bac"/>
</dbReference>
<dbReference type="InterPro" id="IPR001754">
    <property type="entry name" value="OMPdeCOase_dom"/>
</dbReference>
<dbReference type="InterPro" id="IPR011060">
    <property type="entry name" value="RibuloseP-bd_barrel"/>
</dbReference>
<dbReference type="NCBIfam" id="NF001273">
    <property type="entry name" value="PRK00230.1"/>
    <property type="match status" value="1"/>
</dbReference>
<dbReference type="NCBIfam" id="TIGR01740">
    <property type="entry name" value="pyrF"/>
    <property type="match status" value="1"/>
</dbReference>
<dbReference type="PANTHER" id="PTHR32119">
    <property type="entry name" value="OROTIDINE 5'-PHOSPHATE DECARBOXYLASE"/>
    <property type="match status" value="1"/>
</dbReference>
<dbReference type="PANTHER" id="PTHR32119:SF2">
    <property type="entry name" value="OROTIDINE 5'-PHOSPHATE DECARBOXYLASE"/>
    <property type="match status" value="1"/>
</dbReference>
<dbReference type="Pfam" id="PF00215">
    <property type="entry name" value="OMPdecase"/>
    <property type="match status" value="1"/>
</dbReference>
<dbReference type="SMART" id="SM00934">
    <property type="entry name" value="OMPdecase"/>
    <property type="match status" value="1"/>
</dbReference>
<dbReference type="SUPFAM" id="SSF51366">
    <property type="entry name" value="Ribulose-phoshate binding barrel"/>
    <property type="match status" value="1"/>
</dbReference>
<dbReference type="PROSITE" id="PS00156">
    <property type="entry name" value="OMPDECASE"/>
    <property type="match status" value="1"/>
</dbReference>
<sequence length="232" mass="24722">MSVCQTPIIVALDYPTRDAALKLADQLDPKLCRVKVGKELFTSCAAEIVGTLRDKGFEVFLDLKFHDIPNTTAMAVKAAAEMGVWMVNVHCSGGLRMMTACREVLEQRSGPKPLLIGVTVLTSMEREDLAGIGLDIEPQEQVLRLAALAQKAGLDGLVCSALEAQALKTAHPSLQLVTPGIRPAGSAQDDQRRILTPRQALDAGSDYLVIGRPISQAADPAKALADVVAEIA</sequence>
<protein>
    <recommendedName>
        <fullName evidence="1">Orotidine 5'-phosphate decarboxylase</fullName>
        <ecNumber evidence="1">4.1.1.23</ecNumber>
    </recommendedName>
    <alternativeName>
        <fullName evidence="1">OMP decarboxylase</fullName>
        <shortName evidence="1">OMPDCase</shortName>
        <shortName evidence="1">OMPdecase</shortName>
    </alternativeName>
</protein>
<evidence type="ECO:0000255" key="1">
    <source>
        <dbReference type="HAMAP-Rule" id="MF_01200"/>
    </source>
</evidence>
<name>PYRF_PSEFS</name>
<comment type="function">
    <text evidence="1">Catalyzes the decarboxylation of orotidine 5'-monophosphate (OMP) to uridine 5'-monophosphate (UMP).</text>
</comment>
<comment type="catalytic activity">
    <reaction evidence="1">
        <text>orotidine 5'-phosphate + H(+) = UMP + CO2</text>
        <dbReference type="Rhea" id="RHEA:11596"/>
        <dbReference type="ChEBI" id="CHEBI:15378"/>
        <dbReference type="ChEBI" id="CHEBI:16526"/>
        <dbReference type="ChEBI" id="CHEBI:57538"/>
        <dbReference type="ChEBI" id="CHEBI:57865"/>
        <dbReference type="EC" id="4.1.1.23"/>
    </reaction>
</comment>
<comment type="pathway">
    <text evidence="1">Pyrimidine metabolism; UMP biosynthesis via de novo pathway; UMP from orotate: step 2/2.</text>
</comment>
<comment type="subunit">
    <text evidence="1">Homodimer.</text>
</comment>
<comment type="similarity">
    <text evidence="1">Belongs to the OMP decarboxylase family. Type 1 subfamily.</text>
</comment>
<proteinExistence type="inferred from homology"/>
<reference key="1">
    <citation type="journal article" date="2009" name="Genome Biol.">
        <title>Genomic and genetic analyses of diversity and plant interactions of Pseudomonas fluorescens.</title>
        <authorList>
            <person name="Silby M.W."/>
            <person name="Cerdeno-Tarraga A.M."/>
            <person name="Vernikos G.S."/>
            <person name="Giddens S.R."/>
            <person name="Jackson R.W."/>
            <person name="Preston G.M."/>
            <person name="Zhang X.-X."/>
            <person name="Moon C.D."/>
            <person name="Gehrig S.M."/>
            <person name="Godfrey S.A.C."/>
            <person name="Knight C.G."/>
            <person name="Malone J.G."/>
            <person name="Robinson Z."/>
            <person name="Spiers A.J."/>
            <person name="Harris S."/>
            <person name="Challis G.L."/>
            <person name="Yaxley A.M."/>
            <person name="Harris D."/>
            <person name="Seeger K."/>
            <person name="Murphy L."/>
            <person name="Rutter S."/>
            <person name="Squares R."/>
            <person name="Quail M.A."/>
            <person name="Saunders E."/>
            <person name="Mavromatis K."/>
            <person name="Brettin T.S."/>
            <person name="Bentley S.D."/>
            <person name="Hothersall J."/>
            <person name="Stephens E."/>
            <person name="Thomas C.M."/>
            <person name="Parkhill J."/>
            <person name="Levy S.B."/>
            <person name="Rainey P.B."/>
            <person name="Thomson N.R."/>
        </authorList>
    </citation>
    <scope>NUCLEOTIDE SEQUENCE [LARGE SCALE GENOMIC DNA]</scope>
    <source>
        <strain>SBW25</strain>
    </source>
</reference>
<keyword id="KW-0210">Decarboxylase</keyword>
<keyword id="KW-0456">Lyase</keyword>
<keyword id="KW-0665">Pyrimidine biosynthesis</keyword>